<proteinExistence type="inferred from homology"/>
<organism>
    <name type="scientific">Bacillus anthracis</name>
    <dbReference type="NCBI Taxonomy" id="1392"/>
    <lineage>
        <taxon>Bacteria</taxon>
        <taxon>Bacillati</taxon>
        <taxon>Bacillota</taxon>
        <taxon>Bacilli</taxon>
        <taxon>Bacillales</taxon>
        <taxon>Bacillaceae</taxon>
        <taxon>Bacillus</taxon>
        <taxon>Bacillus cereus group</taxon>
    </lineage>
</organism>
<accession>Q81LU1</accession>
<accession>Q6HT94</accession>
<accession>Q6KIZ1</accession>
<protein>
    <recommendedName>
        <fullName evidence="1">Putative pyruvate, phosphate dikinase regulatory protein</fullName>
        <shortName evidence="1">PPDK regulatory protein</shortName>
        <ecNumber evidence="1">2.7.11.32</ecNumber>
        <ecNumber evidence="1">2.7.4.27</ecNumber>
    </recommendedName>
</protein>
<name>PDRP_BACAN</name>
<comment type="function">
    <text evidence="1">Bifunctional serine/threonine kinase and phosphorylase involved in the regulation of the pyruvate, phosphate dikinase (PPDK) by catalyzing its phosphorylation/dephosphorylation.</text>
</comment>
<comment type="catalytic activity">
    <reaction evidence="1">
        <text>N(tele)-phospho-L-histidyl/L-threonyl-[pyruvate, phosphate dikinase] + ADP = N(tele)-phospho-L-histidyl/O-phospho-L-threonyl-[pyruvate, phosphate dikinase] + AMP + H(+)</text>
        <dbReference type="Rhea" id="RHEA:43692"/>
        <dbReference type="Rhea" id="RHEA-COMP:10650"/>
        <dbReference type="Rhea" id="RHEA-COMP:10651"/>
        <dbReference type="ChEBI" id="CHEBI:15378"/>
        <dbReference type="ChEBI" id="CHEBI:30013"/>
        <dbReference type="ChEBI" id="CHEBI:61977"/>
        <dbReference type="ChEBI" id="CHEBI:83586"/>
        <dbReference type="ChEBI" id="CHEBI:456215"/>
        <dbReference type="ChEBI" id="CHEBI:456216"/>
        <dbReference type="EC" id="2.7.11.32"/>
    </reaction>
</comment>
<comment type="catalytic activity">
    <reaction evidence="1">
        <text>N(tele)-phospho-L-histidyl/O-phospho-L-threonyl-[pyruvate, phosphate dikinase] + phosphate + H(+) = N(tele)-phospho-L-histidyl/L-threonyl-[pyruvate, phosphate dikinase] + diphosphate</text>
        <dbReference type="Rhea" id="RHEA:43696"/>
        <dbReference type="Rhea" id="RHEA-COMP:10650"/>
        <dbReference type="Rhea" id="RHEA-COMP:10651"/>
        <dbReference type="ChEBI" id="CHEBI:15378"/>
        <dbReference type="ChEBI" id="CHEBI:30013"/>
        <dbReference type="ChEBI" id="CHEBI:33019"/>
        <dbReference type="ChEBI" id="CHEBI:43474"/>
        <dbReference type="ChEBI" id="CHEBI:61977"/>
        <dbReference type="ChEBI" id="CHEBI:83586"/>
        <dbReference type="EC" id="2.7.4.27"/>
    </reaction>
</comment>
<comment type="similarity">
    <text evidence="1">Belongs to the pyruvate, phosphate/water dikinase regulatory protein family. PDRP subfamily.</text>
</comment>
<reference key="1">
    <citation type="journal article" date="2003" name="Nature">
        <title>The genome sequence of Bacillus anthracis Ames and comparison to closely related bacteria.</title>
        <authorList>
            <person name="Read T.D."/>
            <person name="Peterson S.N."/>
            <person name="Tourasse N.J."/>
            <person name="Baillie L.W."/>
            <person name="Paulsen I.T."/>
            <person name="Nelson K.E."/>
            <person name="Tettelin H."/>
            <person name="Fouts D.E."/>
            <person name="Eisen J.A."/>
            <person name="Gill S.R."/>
            <person name="Holtzapple E.K."/>
            <person name="Okstad O.A."/>
            <person name="Helgason E."/>
            <person name="Rilstone J."/>
            <person name="Wu M."/>
            <person name="Kolonay J.F."/>
            <person name="Beanan M.J."/>
            <person name="Dodson R.J."/>
            <person name="Brinkac L.M."/>
            <person name="Gwinn M.L."/>
            <person name="DeBoy R.T."/>
            <person name="Madpu R."/>
            <person name="Daugherty S.C."/>
            <person name="Durkin A.S."/>
            <person name="Haft D.H."/>
            <person name="Nelson W.C."/>
            <person name="Peterson J.D."/>
            <person name="Pop M."/>
            <person name="Khouri H.M."/>
            <person name="Radune D."/>
            <person name="Benton J.L."/>
            <person name="Mahamoud Y."/>
            <person name="Jiang L."/>
            <person name="Hance I.R."/>
            <person name="Weidman J.F."/>
            <person name="Berry K.J."/>
            <person name="Plaut R.D."/>
            <person name="Wolf A.M."/>
            <person name="Watkins K.L."/>
            <person name="Nierman W.C."/>
            <person name="Hazen A."/>
            <person name="Cline R.T."/>
            <person name="Redmond C."/>
            <person name="Thwaite J.E."/>
            <person name="White O."/>
            <person name="Salzberg S.L."/>
            <person name="Thomason B."/>
            <person name="Friedlander A.M."/>
            <person name="Koehler T.M."/>
            <person name="Hanna P.C."/>
            <person name="Kolstoe A.-B."/>
            <person name="Fraser C.M."/>
        </authorList>
    </citation>
    <scope>NUCLEOTIDE SEQUENCE [LARGE SCALE GENOMIC DNA]</scope>
    <source>
        <strain>Ames / isolate Porton</strain>
    </source>
</reference>
<reference key="2">
    <citation type="journal article" date="2009" name="J. Bacteriol.">
        <title>The complete genome sequence of Bacillus anthracis Ames 'Ancestor'.</title>
        <authorList>
            <person name="Ravel J."/>
            <person name="Jiang L."/>
            <person name="Stanley S.T."/>
            <person name="Wilson M.R."/>
            <person name="Decker R.S."/>
            <person name="Read T.D."/>
            <person name="Worsham P."/>
            <person name="Keim P.S."/>
            <person name="Salzberg S.L."/>
            <person name="Fraser-Liggett C.M."/>
            <person name="Rasko D.A."/>
        </authorList>
    </citation>
    <scope>NUCLEOTIDE SEQUENCE [LARGE SCALE GENOMIC DNA]</scope>
    <source>
        <strain>Ames ancestor</strain>
    </source>
</reference>
<reference key="3">
    <citation type="submission" date="2004-01" db="EMBL/GenBank/DDBJ databases">
        <title>Complete genome sequence of Bacillus anthracis Sterne.</title>
        <authorList>
            <person name="Brettin T.S."/>
            <person name="Bruce D."/>
            <person name="Challacombe J.F."/>
            <person name="Gilna P."/>
            <person name="Han C."/>
            <person name="Hill K."/>
            <person name="Hitchcock P."/>
            <person name="Jackson P."/>
            <person name="Keim P."/>
            <person name="Longmire J."/>
            <person name="Lucas S."/>
            <person name="Okinaka R."/>
            <person name="Richardson P."/>
            <person name="Rubin E."/>
            <person name="Tice H."/>
        </authorList>
    </citation>
    <scope>NUCLEOTIDE SEQUENCE [LARGE SCALE GENOMIC DNA]</scope>
    <source>
        <strain>Sterne</strain>
    </source>
</reference>
<dbReference type="EC" id="2.7.11.32" evidence="1"/>
<dbReference type="EC" id="2.7.4.27" evidence="1"/>
<dbReference type="EMBL" id="AE016879">
    <property type="protein sequence ID" value="AAP28229.1"/>
    <property type="molecule type" value="Genomic_DNA"/>
</dbReference>
<dbReference type="EMBL" id="AE017334">
    <property type="protein sequence ID" value="AAT35427.1"/>
    <property type="molecule type" value="Genomic_DNA"/>
</dbReference>
<dbReference type="EMBL" id="AE017225">
    <property type="protein sequence ID" value="AAT56495.1"/>
    <property type="molecule type" value="Genomic_DNA"/>
</dbReference>
<dbReference type="RefSeq" id="NP_846743.1">
    <property type="nucleotide sequence ID" value="NC_003997.3"/>
</dbReference>
<dbReference type="RefSeq" id="WP_000368943.1">
    <property type="nucleotide sequence ID" value="NZ_WXXJ01000027.1"/>
</dbReference>
<dbReference type="RefSeq" id="YP_030444.1">
    <property type="nucleotide sequence ID" value="NC_005945.1"/>
</dbReference>
<dbReference type="SMR" id="Q81LU1"/>
<dbReference type="STRING" id="261594.GBAA_4520"/>
<dbReference type="DNASU" id="1088246"/>
<dbReference type="KEGG" id="ban:BA_4520"/>
<dbReference type="KEGG" id="bar:GBAA_4520"/>
<dbReference type="KEGG" id="bat:BAS4196"/>
<dbReference type="PATRIC" id="fig|198094.11.peg.4488"/>
<dbReference type="eggNOG" id="COG1806">
    <property type="taxonomic scope" value="Bacteria"/>
</dbReference>
<dbReference type="HOGENOM" id="CLU_046206_2_1_9"/>
<dbReference type="OMA" id="YAQCEFE"/>
<dbReference type="OrthoDB" id="9782201at2"/>
<dbReference type="Proteomes" id="UP000000427">
    <property type="component" value="Chromosome"/>
</dbReference>
<dbReference type="Proteomes" id="UP000000594">
    <property type="component" value="Chromosome"/>
</dbReference>
<dbReference type="GO" id="GO:0043531">
    <property type="term" value="F:ADP binding"/>
    <property type="evidence" value="ECO:0007669"/>
    <property type="project" value="UniProtKB-UniRule"/>
</dbReference>
<dbReference type="GO" id="GO:0005524">
    <property type="term" value="F:ATP binding"/>
    <property type="evidence" value="ECO:0007669"/>
    <property type="project" value="InterPro"/>
</dbReference>
<dbReference type="GO" id="GO:0016776">
    <property type="term" value="F:phosphotransferase activity, phosphate group as acceptor"/>
    <property type="evidence" value="ECO:0007669"/>
    <property type="project" value="UniProtKB-UniRule"/>
</dbReference>
<dbReference type="GO" id="GO:0004674">
    <property type="term" value="F:protein serine/threonine kinase activity"/>
    <property type="evidence" value="ECO:0007669"/>
    <property type="project" value="UniProtKB-UniRule"/>
</dbReference>
<dbReference type="HAMAP" id="MF_00921">
    <property type="entry name" value="PDRP"/>
    <property type="match status" value="1"/>
</dbReference>
<dbReference type="InterPro" id="IPR005177">
    <property type="entry name" value="Kinase-pyrophosphorylase"/>
</dbReference>
<dbReference type="InterPro" id="IPR026565">
    <property type="entry name" value="PPDK_reg"/>
</dbReference>
<dbReference type="NCBIfam" id="NF003742">
    <property type="entry name" value="PRK05339.1"/>
    <property type="match status" value="1"/>
</dbReference>
<dbReference type="PANTHER" id="PTHR31756">
    <property type="entry name" value="PYRUVATE, PHOSPHATE DIKINASE REGULATORY PROTEIN 1, CHLOROPLASTIC"/>
    <property type="match status" value="1"/>
</dbReference>
<dbReference type="PANTHER" id="PTHR31756:SF3">
    <property type="entry name" value="PYRUVATE, PHOSPHATE DIKINASE REGULATORY PROTEIN 1, CHLOROPLASTIC"/>
    <property type="match status" value="1"/>
</dbReference>
<dbReference type="Pfam" id="PF03618">
    <property type="entry name" value="Kinase-PPPase"/>
    <property type="match status" value="1"/>
</dbReference>
<feature type="chain" id="PRO_0000196623" description="Putative pyruvate, phosphate dikinase regulatory protein">
    <location>
        <begin position="1"/>
        <end position="270"/>
    </location>
</feature>
<feature type="binding site" evidence="1">
    <location>
        <begin position="148"/>
        <end position="155"/>
    </location>
    <ligand>
        <name>ADP</name>
        <dbReference type="ChEBI" id="CHEBI:456216"/>
    </ligand>
</feature>
<keyword id="KW-0418">Kinase</keyword>
<keyword id="KW-0547">Nucleotide-binding</keyword>
<keyword id="KW-1185">Reference proteome</keyword>
<keyword id="KW-0723">Serine/threonine-protein kinase</keyword>
<keyword id="KW-0808">Transferase</keyword>
<gene>
    <name type="ordered locus">BA_4520</name>
    <name type="ordered locus">GBAA_4520</name>
    <name type="ordered locus">BAS4196</name>
</gene>
<evidence type="ECO:0000255" key="1">
    <source>
        <dbReference type="HAMAP-Rule" id="MF_00921"/>
    </source>
</evidence>
<sequence>MDNKIVYVVSDSVGETADLVVRAAMGQFPFAPDIRRVPYVEDTGTLKEVISIAKSNQALICFTLVKPDMRQYLVTEAAKEGVEAYDIIGPLIDQIEEITGQVPRYEPGVVRRLDEEYFKKIEAIEFAVKYDDGRDARGILKADIVLIGISRTSKTPLSQYLAHNKRLKVANVPLVPEVDPPEELYQVAKEKCFGLKITPEKLNHIRKERLKSLGLSDGATYANINRIKEEIDHFENVVSKINCQVIDVSNKAIEETANIIVNAVQNQKMF</sequence>